<sequence>MAIEGGERTCGVHELICIRKVSPEAVGFLSAVGVFIILMLLLFLYINKKFCFENVGGFPDLGSEYSTRKNSQDKIYNSYMDKDEHGSSSESEDEALGKYHEALSRTHNSRLPLADSRQRNYAWETRQKYSPLSAEYDGYSSEASIDEGNCIQRMRRTPPLDELQPPPYQDDSGSPHLSCTPSEIGDSKCEFSHCSNSPRCSYNKCPSEGSTGHEIESFHNKGYEEDVPSDSTAVLSPEDMSAQGSSSQLPKPFDPEPEAKYGTLDVTFDYDSQEQKLLVTVTAVTDIPTYNRTGGNSWQVHLVLLPIKKQRAKTSIQRGPCPVFTETFKFNHVESEMIGNYAVRFRLYGVHRMKKEKIVGEKIFYLTKLNLQGKMSLPVILEPSYNHSGCDSQMSVSEMSCSESTSSCQSLEHGSVPEILIGLLYNATTGRLSAEVIKGSHFKNLAANRPPNTYVKLTLLNSMGQEMSKCKTSIRRGQPNPVYKETFVFQVALFQLSDVTLILSVYNKRSMKRKEMIGWISLGLNSSGEEELNHWTEMKESKGQQVCRWHALLES</sequence>
<feature type="chain" id="PRO_0000183978" description="Synaptotagmin-14">
    <location>
        <begin position="1"/>
        <end position="555"/>
    </location>
</feature>
<feature type="topological domain" description="Extracellular" evidence="2">
    <location>
        <begin position="1"/>
        <end position="24"/>
    </location>
</feature>
<feature type="transmembrane region" description="Helical; Signal-anchor for type III membrane protein" evidence="2">
    <location>
        <begin position="25"/>
        <end position="47"/>
    </location>
</feature>
<feature type="topological domain" description="Cytoplasmic" evidence="2">
    <location>
        <begin position="48"/>
        <end position="555"/>
    </location>
</feature>
<feature type="domain" description="C2 1" evidence="3">
    <location>
        <begin position="260"/>
        <end position="379"/>
    </location>
</feature>
<feature type="domain" description="C2 2" evidence="3">
    <location>
        <begin position="415"/>
        <end position="550"/>
    </location>
</feature>
<feature type="region of interest" description="Disordered" evidence="4">
    <location>
        <begin position="157"/>
        <end position="179"/>
    </location>
</feature>
<feature type="region of interest" description="Disordered" evidence="4">
    <location>
        <begin position="222"/>
        <end position="257"/>
    </location>
</feature>
<feature type="splice variant" id="VSP_011602" description="In isoform 3 and isoform 4." evidence="6">
    <location>
        <begin position="1"/>
        <end position="38"/>
    </location>
</feature>
<feature type="splice variant" id="VSP_046124" description="In isoform 7." evidence="7">
    <original>MAIEGGERTCGVHELICIRK</original>
    <variation>MASASWRLKVEREPVEYMNLSVLEKIGYFSVARLEYSGTILAHCNFRLLGSNDSSASASQVTGTT</variation>
    <location>
        <begin position="1"/>
        <end position="20"/>
    </location>
</feature>
<feature type="splice variant" id="VSP_011603" description="In isoform 4." evidence="6">
    <original>QVHLV</original>
    <variation>AVTPK</variation>
    <location>
        <begin position="299"/>
        <end position="303"/>
    </location>
</feature>
<feature type="splice variant" id="VSP_011604" description="In isoform 4." evidence="6">
    <location>
        <begin position="304"/>
        <end position="555"/>
    </location>
</feature>
<feature type="splice variant" id="VSP_011605" description="In isoform 2." evidence="6">
    <original>PPNTYVKL</original>
    <variation>HPMDCSVV</variation>
    <location>
        <begin position="450"/>
        <end position="457"/>
    </location>
</feature>
<feature type="splice variant" id="VSP_011607" description="In isoform 5." evidence="6">
    <original>N</original>
    <variation>TFHPLLSDGLFCCLKHLIGGQVYIIRD</variation>
    <location>
        <position position="452"/>
    </location>
</feature>
<feature type="splice variant" id="VSP_011608" description="In isoform 6 and isoform 7." evidence="6 7">
    <original>N</original>
    <variation>NGLFCCLKHLIGGQVYIIRD</variation>
    <location>
        <position position="452"/>
    </location>
</feature>
<feature type="splice variant" id="VSP_011606" description="In isoform 2." evidence="6">
    <location>
        <begin position="458"/>
        <end position="555"/>
    </location>
</feature>
<feature type="sequence variant" id="VAR_066663" description="In dbSNP:rs759296305." evidence="5">
    <original>G</original>
    <variation>E</variation>
    <location>
        <position position="138"/>
    </location>
</feature>
<feature type="sequence variant" id="VAR_066664" description="In SCAR11; shows intracellular localization different from that of the wild-type protein; forms a reticular pattern in the cytoplasm; does not show submembranous distribution; is abnormally retained in the endoplasmic reticulum consistent to improper folding; dbSNP:rs387907033." evidence="5">
    <original>G</original>
    <variation>D</variation>
    <location>
        <position position="439"/>
    </location>
</feature>
<feature type="sequence conflict" description="In Ref. 2; CAE85112." evidence="8" ref="2">
    <original>S</original>
    <variation>N</variation>
    <location>
        <position position="195"/>
    </location>
</feature>
<feature type="sequence conflict" description="In Ref. 2; CAE85113." evidence="8" ref="2">
    <original>V</original>
    <variation>A</variation>
    <location>
        <position position="323"/>
    </location>
</feature>
<feature type="sequence conflict" description="In Ref. 1; BAC76809 and 3; BAC03682." evidence="8" ref="1 3">
    <original>K</original>
    <variation>E</variation>
    <location>
        <position position="514"/>
    </location>
</feature>
<evidence type="ECO:0000250" key="1"/>
<evidence type="ECO:0000255" key="2"/>
<evidence type="ECO:0000255" key="3">
    <source>
        <dbReference type="PROSITE-ProRule" id="PRU00041"/>
    </source>
</evidence>
<evidence type="ECO:0000256" key="4">
    <source>
        <dbReference type="SAM" id="MobiDB-lite"/>
    </source>
</evidence>
<evidence type="ECO:0000269" key="5">
    <source>
    </source>
</evidence>
<evidence type="ECO:0000303" key="6">
    <source>
    </source>
</evidence>
<evidence type="ECO:0000303" key="7">
    <source>
    </source>
</evidence>
<evidence type="ECO:0000305" key="8"/>
<protein>
    <recommendedName>
        <fullName>Synaptotagmin-14</fullName>
    </recommendedName>
    <alternativeName>
        <fullName>Synaptotagmin XIV</fullName>
        <shortName>SytXIV</shortName>
    </alternativeName>
</protein>
<keyword id="KW-0025">Alternative splicing</keyword>
<keyword id="KW-0225">Disease variant</keyword>
<keyword id="KW-0472">Membrane</keyword>
<keyword id="KW-0523">Neurodegeneration</keyword>
<keyword id="KW-1267">Proteomics identification</keyword>
<keyword id="KW-1185">Reference proteome</keyword>
<keyword id="KW-0677">Repeat</keyword>
<keyword id="KW-0735">Signal-anchor</keyword>
<keyword id="KW-0812">Transmembrane</keyword>
<keyword id="KW-1133">Transmembrane helix</keyword>
<organism>
    <name type="scientific">Homo sapiens</name>
    <name type="common">Human</name>
    <dbReference type="NCBI Taxonomy" id="9606"/>
    <lineage>
        <taxon>Eukaryota</taxon>
        <taxon>Metazoa</taxon>
        <taxon>Chordata</taxon>
        <taxon>Craniata</taxon>
        <taxon>Vertebrata</taxon>
        <taxon>Euteleostomi</taxon>
        <taxon>Mammalia</taxon>
        <taxon>Eutheria</taxon>
        <taxon>Euarchontoglires</taxon>
        <taxon>Primates</taxon>
        <taxon>Haplorrhini</taxon>
        <taxon>Catarrhini</taxon>
        <taxon>Hominidae</taxon>
        <taxon>Homo</taxon>
    </lineage>
</organism>
<comment type="function">
    <text>May be involved in the trafficking and exocytosis of secretory vesicles in non-neuronal tissues. Is Ca(2+)-independent.</text>
</comment>
<comment type="subunit">
    <text evidence="1">Homodimer. Can also form heterodimers (By similarity).</text>
</comment>
<comment type="subcellular location">
    <subcellularLocation>
        <location evidence="5">Membrane</location>
        <topology evidence="5">Single-pass type III membrane protein</topology>
    </subcellularLocation>
    <text>Localized in perinuclear and submembranous regions.</text>
</comment>
<comment type="alternative products">
    <event type="alternative splicing"/>
    <isoform>
        <id>Q8NB59-1</id>
        <name>1</name>
        <sequence type="displayed"/>
    </isoform>
    <isoform>
        <id>Q8NB59-2</id>
        <name>2</name>
        <sequence type="described" ref="VSP_011605 VSP_011606"/>
    </isoform>
    <isoform>
        <id>Q8NB59-3</id>
        <name>3</name>
        <sequence type="described" ref="VSP_011602"/>
    </isoform>
    <isoform>
        <id>Q8NB59-4</id>
        <name>4</name>
        <sequence type="described" ref="VSP_011602 VSP_011603 VSP_011604"/>
    </isoform>
    <isoform>
        <id>Q8NB59-5</id>
        <name>5</name>
        <sequence type="described" ref="VSP_011607"/>
    </isoform>
    <isoform>
        <id>Q8NB59-6</id>
        <name>6</name>
        <sequence type="described" ref="VSP_011608"/>
    </isoform>
    <isoform>
        <id>Q8NB59-7</id>
        <name>7</name>
        <sequence type="described" ref="VSP_046124 VSP_011608"/>
    </isoform>
</comment>
<comment type="tissue specificity">
    <text evidence="5">Highly expressed in fetal and adult brain tissue.</text>
</comment>
<comment type="disease" evidence="5">
    <disease id="DI-03244">
        <name>Spinocerebellar ataxia, autosomal recessive, 11</name>
        <acronym>SCAR11</acronym>
        <description>A form of spinocerebellar ataxia, a clinically and genetically heterogeneous group of cerebellar disorders. Patients show progressive incoordination of gait and often poor coordination of hands, speech and eye movements, due to degeneration of the cerebellum with variable involvement of the brainstem and spinal cord. SCAR11 is associated with psychomotor retardation.</description>
        <dbReference type="MIM" id="614229"/>
    </disease>
    <text>The disease is caused by variants affecting the gene represented in this entry.</text>
</comment>
<comment type="similarity">
    <text evidence="8">Belongs to the synaptotagmin family.</text>
</comment>
<gene>
    <name type="primary">SYT14</name>
</gene>
<accession>Q8NB59</accession>
<accession>B1AJU0</accession>
<accession>B1AJU1</accession>
<accession>F5H426</accession>
<accession>Q5THX7</accession>
<accession>Q707N3</accession>
<accession>Q707N4</accession>
<accession>Q707N5</accession>
<accession>Q707N6</accession>
<accession>Q707N7</accession>
<reference key="1">
    <citation type="journal article" date="2003" name="J. Biochem.">
        <title>Molecular cloning, expression, and characterization of a novel class of synaptotagmin (Syt XIV) conserved from Drosophila to humans.</title>
        <authorList>
            <person name="Fukuda M."/>
        </authorList>
    </citation>
    <scope>NUCLEOTIDE SEQUENCE [MRNA] (ISOFORM 1)</scope>
</reference>
<reference key="2">
    <citation type="journal article" date="2004" name="BMC Genomics">
        <title>Synaptotagmin gene content of the sequenced genomes.</title>
        <authorList>
            <person name="Craxton M.A."/>
        </authorList>
    </citation>
    <scope>NUCLEOTIDE SEQUENCE [MRNA] (ISOFORMS 2; 3; 4; 5 AND 6)</scope>
</reference>
<reference key="3">
    <citation type="journal article" date="2004" name="Nat. Genet.">
        <title>Complete sequencing and characterization of 21,243 full-length human cDNAs.</title>
        <authorList>
            <person name="Ota T."/>
            <person name="Suzuki Y."/>
            <person name="Nishikawa T."/>
            <person name="Otsuki T."/>
            <person name="Sugiyama T."/>
            <person name="Irie R."/>
            <person name="Wakamatsu A."/>
            <person name="Hayashi K."/>
            <person name="Sato H."/>
            <person name="Nagai K."/>
            <person name="Kimura K."/>
            <person name="Makita H."/>
            <person name="Sekine M."/>
            <person name="Obayashi M."/>
            <person name="Nishi T."/>
            <person name="Shibahara T."/>
            <person name="Tanaka T."/>
            <person name="Ishii S."/>
            <person name="Yamamoto J."/>
            <person name="Saito K."/>
            <person name="Kawai Y."/>
            <person name="Isono Y."/>
            <person name="Nakamura Y."/>
            <person name="Nagahari K."/>
            <person name="Murakami K."/>
            <person name="Yasuda T."/>
            <person name="Iwayanagi T."/>
            <person name="Wagatsuma M."/>
            <person name="Shiratori A."/>
            <person name="Sudo H."/>
            <person name="Hosoiri T."/>
            <person name="Kaku Y."/>
            <person name="Kodaira H."/>
            <person name="Kondo H."/>
            <person name="Sugawara M."/>
            <person name="Takahashi M."/>
            <person name="Kanda K."/>
            <person name="Yokoi T."/>
            <person name="Furuya T."/>
            <person name="Kikkawa E."/>
            <person name="Omura Y."/>
            <person name="Abe K."/>
            <person name="Kamihara K."/>
            <person name="Katsuta N."/>
            <person name="Sato K."/>
            <person name="Tanikawa M."/>
            <person name="Yamazaki M."/>
            <person name="Ninomiya K."/>
            <person name="Ishibashi T."/>
            <person name="Yamashita H."/>
            <person name="Murakawa K."/>
            <person name="Fujimori K."/>
            <person name="Tanai H."/>
            <person name="Kimata M."/>
            <person name="Watanabe M."/>
            <person name="Hiraoka S."/>
            <person name="Chiba Y."/>
            <person name="Ishida S."/>
            <person name="Ono Y."/>
            <person name="Takiguchi S."/>
            <person name="Watanabe S."/>
            <person name="Yosida M."/>
            <person name="Hotuta T."/>
            <person name="Kusano J."/>
            <person name="Kanehori K."/>
            <person name="Takahashi-Fujii A."/>
            <person name="Hara H."/>
            <person name="Tanase T.-O."/>
            <person name="Nomura Y."/>
            <person name="Togiya S."/>
            <person name="Komai F."/>
            <person name="Hara R."/>
            <person name="Takeuchi K."/>
            <person name="Arita M."/>
            <person name="Imose N."/>
            <person name="Musashino K."/>
            <person name="Yuuki H."/>
            <person name="Oshima A."/>
            <person name="Sasaki N."/>
            <person name="Aotsuka S."/>
            <person name="Yoshikawa Y."/>
            <person name="Matsunawa H."/>
            <person name="Ichihara T."/>
            <person name="Shiohata N."/>
            <person name="Sano S."/>
            <person name="Moriya S."/>
            <person name="Momiyama H."/>
            <person name="Satoh N."/>
            <person name="Takami S."/>
            <person name="Terashima Y."/>
            <person name="Suzuki O."/>
            <person name="Nakagawa S."/>
            <person name="Senoh A."/>
            <person name="Mizoguchi H."/>
            <person name="Goto Y."/>
            <person name="Shimizu F."/>
            <person name="Wakebe H."/>
            <person name="Hishigaki H."/>
            <person name="Watanabe T."/>
            <person name="Sugiyama A."/>
            <person name="Takemoto M."/>
            <person name="Kawakami B."/>
            <person name="Yamazaki M."/>
            <person name="Watanabe K."/>
            <person name="Kumagai A."/>
            <person name="Itakura S."/>
            <person name="Fukuzumi Y."/>
            <person name="Fujimori Y."/>
            <person name="Komiyama M."/>
            <person name="Tashiro H."/>
            <person name="Tanigami A."/>
            <person name="Fujiwara T."/>
            <person name="Ono T."/>
            <person name="Yamada K."/>
            <person name="Fujii Y."/>
            <person name="Ozaki K."/>
            <person name="Hirao M."/>
            <person name="Ohmori Y."/>
            <person name="Kawabata A."/>
            <person name="Hikiji T."/>
            <person name="Kobatake N."/>
            <person name="Inagaki H."/>
            <person name="Ikema Y."/>
            <person name="Okamoto S."/>
            <person name="Okitani R."/>
            <person name="Kawakami T."/>
            <person name="Noguchi S."/>
            <person name="Itoh T."/>
            <person name="Shigeta K."/>
            <person name="Senba T."/>
            <person name="Matsumura K."/>
            <person name="Nakajima Y."/>
            <person name="Mizuno T."/>
            <person name="Morinaga M."/>
            <person name="Sasaki M."/>
            <person name="Togashi T."/>
            <person name="Oyama M."/>
            <person name="Hata H."/>
            <person name="Watanabe M."/>
            <person name="Komatsu T."/>
            <person name="Mizushima-Sugano J."/>
            <person name="Satoh T."/>
            <person name="Shirai Y."/>
            <person name="Takahashi Y."/>
            <person name="Nakagawa K."/>
            <person name="Okumura K."/>
            <person name="Nagase T."/>
            <person name="Nomura N."/>
            <person name="Kikuchi H."/>
            <person name="Masuho Y."/>
            <person name="Yamashita R."/>
            <person name="Nakai K."/>
            <person name="Yada T."/>
            <person name="Nakamura Y."/>
            <person name="Ohara O."/>
            <person name="Isogai T."/>
            <person name="Sugano S."/>
        </authorList>
    </citation>
    <scope>NUCLEOTIDE SEQUENCE [LARGE SCALE MRNA] (ISOFORM 1)</scope>
    <source>
        <tissue>Brain</tissue>
    </source>
</reference>
<reference key="4">
    <citation type="journal article" date="2006" name="Nature">
        <title>The DNA sequence and biological annotation of human chromosome 1.</title>
        <authorList>
            <person name="Gregory S.G."/>
            <person name="Barlow K.F."/>
            <person name="McLay K.E."/>
            <person name="Kaul R."/>
            <person name="Swarbreck D."/>
            <person name="Dunham A."/>
            <person name="Scott C.E."/>
            <person name="Howe K.L."/>
            <person name="Woodfine K."/>
            <person name="Spencer C.C.A."/>
            <person name="Jones M.C."/>
            <person name="Gillson C."/>
            <person name="Searle S."/>
            <person name="Zhou Y."/>
            <person name="Kokocinski F."/>
            <person name="McDonald L."/>
            <person name="Evans R."/>
            <person name="Phillips K."/>
            <person name="Atkinson A."/>
            <person name="Cooper R."/>
            <person name="Jones C."/>
            <person name="Hall R.E."/>
            <person name="Andrews T.D."/>
            <person name="Lloyd C."/>
            <person name="Ainscough R."/>
            <person name="Almeida J.P."/>
            <person name="Ambrose K.D."/>
            <person name="Anderson F."/>
            <person name="Andrew R.W."/>
            <person name="Ashwell R.I.S."/>
            <person name="Aubin K."/>
            <person name="Babbage A.K."/>
            <person name="Bagguley C.L."/>
            <person name="Bailey J."/>
            <person name="Beasley H."/>
            <person name="Bethel G."/>
            <person name="Bird C.P."/>
            <person name="Bray-Allen S."/>
            <person name="Brown J.Y."/>
            <person name="Brown A.J."/>
            <person name="Buckley D."/>
            <person name="Burton J."/>
            <person name="Bye J."/>
            <person name="Carder C."/>
            <person name="Chapman J.C."/>
            <person name="Clark S.Y."/>
            <person name="Clarke G."/>
            <person name="Clee C."/>
            <person name="Cobley V."/>
            <person name="Collier R.E."/>
            <person name="Corby N."/>
            <person name="Coville G.J."/>
            <person name="Davies J."/>
            <person name="Deadman R."/>
            <person name="Dunn M."/>
            <person name="Earthrowl M."/>
            <person name="Ellington A.G."/>
            <person name="Errington H."/>
            <person name="Frankish A."/>
            <person name="Frankland J."/>
            <person name="French L."/>
            <person name="Garner P."/>
            <person name="Garnett J."/>
            <person name="Gay L."/>
            <person name="Ghori M.R.J."/>
            <person name="Gibson R."/>
            <person name="Gilby L.M."/>
            <person name="Gillett W."/>
            <person name="Glithero R.J."/>
            <person name="Grafham D.V."/>
            <person name="Griffiths C."/>
            <person name="Griffiths-Jones S."/>
            <person name="Grocock R."/>
            <person name="Hammond S."/>
            <person name="Harrison E.S.I."/>
            <person name="Hart E."/>
            <person name="Haugen E."/>
            <person name="Heath P.D."/>
            <person name="Holmes S."/>
            <person name="Holt K."/>
            <person name="Howden P.J."/>
            <person name="Hunt A.R."/>
            <person name="Hunt S.E."/>
            <person name="Hunter G."/>
            <person name="Isherwood J."/>
            <person name="James R."/>
            <person name="Johnson C."/>
            <person name="Johnson D."/>
            <person name="Joy A."/>
            <person name="Kay M."/>
            <person name="Kershaw J.K."/>
            <person name="Kibukawa M."/>
            <person name="Kimberley A.M."/>
            <person name="King A."/>
            <person name="Knights A.J."/>
            <person name="Lad H."/>
            <person name="Laird G."/>
            <person name="Lawlor S."/>
            <person name="Leongamornlert D.A."/>
            <person name="Lloyd D.M."/>
            <person name="Loveland J."/>
            <person name="Lovell J."/>
            <person name="Lush M.J."/>
            <person name="Lyne R."/>
            <person name="Martin S."/>
            <person name="Mashreghi-Mohammadi M."/>
            <person name="Matthews L."/>
            <person name="Matthews N.S.W."/>
            <person name="McLaren S."/>
            <person name="Milne S."/>
            <person name="Mistry S."/>
            <person name="Moore M.J.F."/>
            <person name="Nickerson T."/>
            <person name="O'Dell C.N."/>
            <person name="Oliver K."/>
            <person name="Palmeiri A."/>
            <person name="Palmer S.A."/>
            <person name="Parker A."/>
            <person name="Patel D."/>
            <person name="Pearce A.V."/>
            <person name="Peck A.I."/>
            <person name="Pelan S."/>
            <person name="Phelps K."/>
            <person name="Phillimore B.J."/>
            <person name="Plumb R."/>
            <person name="Rajan J."/>
            <person name="Raymond C."/>
            <person name="Rouse G."/>
            <person name="Saenphimmachak C."/>
            <person name="Sehra H.K."/>
            <person name="Sheridan E."/>
            <person name="Shownkeen R."/>
            <person name="Sims S."/>
            <person name="Skuce C.D."/>
            <person name="Smith M."/>
            <person name="Steward C."/>
            <person name="Subramanian S."/>
            <person name="Sycamore N."/>
            <person name="Tracey A."/>
            <person name="Tromans A."/>
            <person name="Van Helmond Z."/>
            <person name="Wall M."/>
            <person name="Wallis J.M."/>
            <person name="White S."/>
            <person name="Whitehead S.L."/>
            <person name="Wilkinson J.E."/>
            <person name="Willey D.L."/>
            <person name="Williams H."/>
            <person name="Wilming L."/>
            <person name="Wray P.W."/>
            <person name="Wu Z."/>
            <person name="Coulson A."/>
            <person name="Vaudin M."/>
            <person name="Sulston J.E."/>
            <person name="Durbin R.M."/>
            <person name="Hubbard T."/>
            <person name="Wooster R."/>
            <person name="Dunham I."/>
            <person name="Carter N.P."/>
            <person name="McVean G."/>
            <person name="Ross M.T."/>
            <person name="Harrow J."/>
            <person name="Olson M.V."/>
            <person name="Beck S."/>
            <person name="Rogers J."/>
            <person name="Bentley D.R."/>
        </authorList>
    </citation>
    <scope>NUCLEOTIDE SEQUENCE [LARGE SCALE GENOMIC DNA]</scope>
</reference>
<reference key="5">
    <citation type="journal article" date="2004" name="Genome Res.">
        <title>The status, quality, and expansion of the NIH full-length cDNA project: the Mammalian Gene Collection (MGC).</title>
        <authorList>
            <consortium name="The MGC Project Team"/>
        </authorList>
    </citation>
    <scope>NUCLEOTIDE SEQUENCE [LARGE SCALE MRNA] (ISOFORM 7)</scope>
    <source>
        <tissue>Cerebellum</tissue>
    </source>
</reference>
<reference key="6">
    <citation type="journal article" date="2011" name="Am. J. Hum. Genet.">
        <title>Exome sequencing reveals a homozygous SYT14 mutation in adult-onset, autosomal-recessive spinocerebellar ataxia with psychomotor retardation.</title>
        <authorList>
            <person name="Doi H."/>
            <person name="Yoshida K."/>
            <person name="Yasuda T."/>
            <person name="Fukuda M."/>
            <person name="Fukuda Y."/>
            <person name="Morita H."/>
            <person name="Ikeda S."/>
            <person name="Kato R."/>
            <person name="Tsurusaki Y."/>
            <person name="Miyake N."/>
            <person name="Saitsu H."/>
            <person name="Sakai H."/>
            <person name="Miyatake S."/>
            <person name="Shiina M."/>
            <person name="Nukina N."/>
            <person name="Koyano S."/>
            <person name="Tsuji S."/>
            <person name="Kuroiwa Y."/>
            <person name="Matsumoto N."/>
        </authorList>
    </citation>
    <scope>TISSUE SPECIFICITY</scope>
    <scope>SUBCELLULAR LOCATION</scope>
    <scope>VARIANT SCAR11 ASP-439</scope>
    <scope>VARIANT GLU-138</scope>
    <scope>CHARACTERIZATION OF VARIANT SCAR11 ASP-439</scope>
</reference>
<proteinExistence type="evidence at protein level"/>
<dbReference type="EMBL" id="AB102948">
    <property type="protein sequence ID" value="BAC76809.1"/>
    <property type="molecule type" value="mRNA"/>
</dbReference>
<dbReference type="EMBL" id="AJ617623">
    <property type="protein sequence ID" value="CAE85109.1"/>
    <property type="molecule type" value="mRNA"/>
</dbReference>
<dbReference type="EMBL" id="AJ617624">
    <property type="protein sequence ID" value="CAE85110.1"/>
    <property type="molecule type" value="mRNA"/>
</dbReference>
<dbReference type="EMBL" id="AJ617625">
    <property type="protein sequence ID" value="CAE85111.1"/>
    <property type="molecule type" value="mRNA"/>
</dbReference>
<dbReference type="EMBL" id="AJ617626">
    <property type="protein sequence ID" value="CAE85112.1"/>
    <property type="molecule type" value="mRNA"/>
</dbReference>
<dbReference type="EMBL" id="AJ617627">
    <property type="protein sequence ID" value="CAE85113.1"/>
    <property type="molecule type" value="mRNA"/>
</dbReference>
<dbReference type="EMBL" id="AK091517">
    <property type="protein sequence ID" value="BAC03682.1"/>
    <property type="molecule type" value="mRNA"/>
</dbReference>
<dbReference type="EMBL" id="AL513263">
    <property type="protein sequence ID" value="CAI17884.1"/>
    <property type="molecule type" value="Genomic_DNA"/>
</dbReference>
<dbReference type="EMBL" id="AL022397">
    <property type="protein sequence ID" value="CAI17884.1"/>
    <property type="status" value="JOINED"/>
    <property type="molecule type" value="Genomic_DNA"/>
</dbReference>
<dbReference type="EMBL" id="AL022399">
    <property type="protein sequence ID" value="CAI17884.1"/>
    <property type="status" value="JOINED"/>
    <property type="molecule type" value="Genomic_DNA"/>
</dbReference>
<dbReference type="EMBL" id="AL022397">
    <property type="protein sequence ID" value="CAI17887.1"/>
    <property type="molecule type" value="Genomic_DNA"/>
</dbReference>
<dbReference type="EMBL" id="AL022399">
    <property type="protein sequence ID" value="CAI17887.1"/>
    <property type="status" value="JOINED"/>
    <property type="molecule type" value="Genomic_DNA"/>
</dbReference>
<dbReference type="EMBL" id="AL513263">
    <property type="protein sequence ID" value="CAI17887.1"/>
    <property type="status" value="JOINED"/>
    <property type="molecule type" value="Genomic_DNA"/>
</dbReference>
<dbReference type="EMBL" id="AL022397">
    <property type="protein sequence ID" value="CAI17888.1"/>
    <property type="molecule type" value="Genomic_DNA"/>
</dbReference>
<dbReference type="EMBL" id="AL513263">
    <property type="protein sequence ID" value="CAI17888.1"/>
    <property type="status" value="JOINED"/>
    <property type="molecule type" value="Genomic_DNA"/>
</dbReference>
<dbReference type="EMBL" id="AL022399">
    <property type="protein sequence ID" value="CAI17888.1"/>
    <property type="status" value="JOINED"/>
    <property type="molecule type" value="Genomic_DNA"/>
</dbReference>
<dbReference type="EMBL" id="AL022397">
    <property type="protein sequence ID" value="CAI17889.1"/>
    <property type="molecule type" value="Genomic_DNA"/>
</dbReference>
<dbReference type="EMBL" id="AL513263">
    <property type="protein sequence ID" value="CAI17889.1"/>
    <property type="status" value="JOINED"/>
    <property type="molecule type" value="Genomic_DNA"/>
</dbReference>
<dbReference type="EMBL" id="AL022399">
    <property type="protein sequence ID" value="CAI22770.1"/>
    <property type="molecule type" value="Genomic_DNA"/>
</dbReference>
<dbReference type="EMBL" id="AL513263">
    <property type="protein sequence ID" value="CAI22770.1"/>
    <property type="status" value="JOINED"/>
    <property type="molecule type" value="Genomic_DNA"/>
</dbReference>
<dbReference type="EMBL" id="AL022397">
    <property type="protein sequence ID" value="CAI22770.1"/>
    <property type="status" value="JOINED"/>
    <property type="molecule type" value="Genomic_DNA"/>
</dbReference>
<dbReference type="EMBL" id="AL513263">
    <property type="protein sequence ID" value="CAI17885.1"/>
    <property type="molecule type" value="Genomic_DNA"/>
</dbReference>
<dbReference type="EMBL" id="AL022399">
    <property type="protein sequence ID" value="CAI17885.1"/>
    <property type="status" value="JOINED"/>
    <property type="molecule type" value="Genomic_DNA"/>
</dbReference>
<dbReference type="EMBL" id="AL022397">
    <property type="protein sequence ID" value="CAI17885.1"/>
    <property type="status" value="JOINED"/>
    <property type="molecule type" value="Genomic_DNA"/>
</dbReference>
<dbReference type="EMBL" id="AL513263">
    <property type="protein sequence ID" value="CAI17886.1"/>
    <property type="molecule type" value="Genomic_DNA"/>
</dbReference>
<dbReference type="EMBL" id="AL022397">
    <property type="protein sequence ID" value="CAI17886.1"/>
    <property type="status" value="JOINED"/>
    <property type="molecule type" value="Genomic_DNA"/>
</dbReference>
<dbReference type="EMBL" id="AL022399">
    <property type="protein sequence ID" value="CAI22771.1"/>
    <property type="molecule type" value="Genomic_DNA"/>
</dbReference>
<dbReference type="EMBL" id="AL022397">
    <property type="protein sequence ID" value="CAI22771.1"/>
    <property type="status" value="JOINED"/>
    <property type="molecule type" value="Genomic_DNA"/>
</dbReference>
<dbReference type="EMBL" id="AL513263">
    <property type="protein sequence ID" value="CAI22771.1"/>
    <property type="status" value="JOINED"/>
    <property type="molecule type" value="Genomic_DNA"/>
</dbReference>
<dbReference type="EMBL" id="BC144157">
    <property type="status" value="NOT_ANNOTATED_CDS"/>
    <property type="molecule type" value="mRNA"/>
</dbReference>
<dbReference type="CCDS" id="CCDS31014.1">
    <molecule id="Q8NB59-1"/>
</dbReference>
<dbReference type="CCDS" id="CCDS53470.1">
    <molecule id="Q8NB59-6"/>
</dbReference>
<dbReference type="CCDS" id="CCDS58058.1">
    <molecule id="Q8NB59-3"/>
</dbReference>
<dbReference type="RefSeq" id="NP_001139733.1">
    <molecule id="Q8NB59-7"/>
    <property type="nucleotide sequence ID" value="NM_001146261.4"/>
</dbReference>
<dbReference type="RefSeq" id="NP_001139734.1">
    <molecule id="Q8NB59-6"/>
    <property type="nucleotide sequence ID" value="NM_001146262.4"/>
</dbReference>
<dbReference type="RefSeq" id="NP_001242935.1">
    <molecule id="Q8NB59-3"/>
    <property type="nucleotide sequence ID" value="NM_001256006.3"/>
</dbReference>
<dbReference type="RefSeq" id="NP_694994.2">
    <molecule id="Q8NB59-1"/>
    <property type="nucleotide sequence ID" value="NM_153262.5"/>
</dbReference>
<dbReference type="SMR" id="Q8NB59"/>
<dbReference type="BioGRID" id="129128">
    <property type="interactions" value="4"/>
</dbReference>
<dbReference type="FunCoup" id="Q8NB59">
    <property type="interactions" value="249"/>
</dbReference>
<dbReference type="IntAct" id="Q8NB59">
    <property type="interactions" value="1"/>
</dbReference>
<dbReference type="STRING" id="9606.ENSP00000486230"/>
<dbReference type="iPTMnet" id="Q8NB59"/>
<dbReference type="PhosphoSitePlus" id="Q8NB59"/>
<dbReference type="BioMuta" id="SYT14"/>
<dbReference type="DMDM" id="116242810"/>
<dbReference type="jPOST" id="Q8NB59"/>
<dbReference type="MassIVE" id="Q8NB59"/>
<dbReference type="PaxDb" id="9606-ENSP00000355986"/>
<dbReference type="PeptideAtlas" id="Q8NB59"/>
<dbReference type="Antibodypedia" id="51697">
    <property type="antibodies" value="30 antibodies from 14 providers"/>
</dbReference>
<dbReference type="DNASU" id="255928"/>
<dbReference type="Ensembl" id="ENST00000367015.5">
    <molecule id="Q8NB59-3"/>
    <property type="protein sequence ID" value="ENSP00000355982.1"/>
    <property type="gene ID" value="ENSG00000143469.21"/>
</dbReference>
<dbReference type="Ensembl" id="ENST00000367019.6">
    <molecule id="Q8NB59-6"/>
    <property type="protein sequence ID" value="ENSP00000355986.1"/>
    <property type="gene ID" value="ENSG00000143469.21"/>
</dbReference>
<dbReference type="Ensembl" id="ENST00000399639.6">
    <molecule id="Q8NB59-4"/>
    <property type="protein sequence ID" value="ENSP00000445837.2"/>
    <property type="gene ID" value="ENSG00000143469.21"/>
</dbReference>
<dbReference type="Ensembl" id="ENST00000472886.5">
    <molecule id="Q8NB59-1"/>
    <property type="protein sequence ID" value="ENSP00000418901.1"/>
    <property type="gene ID" value="ENSG00000143469.21"/>
</dbReference>
<dbReference type="Ensembl" id="ENST00000537238.5">
    <molecule id="Q8NB59-3"/>
    <property type="protein sequence ID" value="ENSP00000437423.1"/>
    <property type="gene ID" value="ENSG00000143469.21"/>
</dbReference>
<dbReference type="GeneID" id="255928"/>
<dbReference type="KEGG" id="hsa:255928"/>
<dbReference type="MANE-Select" id="ENST00000367019.6">
    <molecule id="Q8NB59-6"/>
    <property type="protein sequence ID" value="ENSP00000355986.1"/>
    <property type="RefSeq nucleotide sequence ID" value="NM_001146262.4"/>
    <property type="RefSeq protein sequence ID" value="NP_001139734.1"/>
</dbReference>
<dbReference type="UCSC" id="uc001hht.6">
    <molecule id="Q8NB59-1"/>
    <property type="organism name" value="human"/>
</dbReference>
<dbReference type="AGR" id="HGNC:23143"/>
<dbReference type="CTD" id="255928"/>
<dbReference type="DisGeNET" id="255928"/>
<dbReference type="GeneCards" id="SYT14"/>
<dbReference type="HGNC" id="HGNC:23143">
    <property type="gene designation" value="SYT14"/>
</dbReference>
<dbReference type="HPA" id="ENSG00000143469">
    <property type="expression patterns" value="Tissue enhanced (retina, testis, thyroid gland)"/>
</dbReference>
<dbReference type="MalaCards" id="SYT14"/>
<dbReference type="MIM" id="610949">
    <property type="type" value="gene"/>
</dbReference>
<dbReference type="MIM" id="614229">
    <property type="type" value="phenotype"/>
</dbReference>
<dbReference type="neXtProt" id="NX_Q8NB59"/>
<dbReference type="OpenTargets" id="ENSG00000143469"/>
<dbReference type="Orphanet" id="284271">
    <property type="disease" value="Autosomal recessive cerebellar ataxia-psychomotor delay syndrome"/>
</dbReference>
<dbReference type="PharmGKB" id="PA134887689"/>
<dbReference type="VEuPathDB" id="HostDB:ENSG00000143469"/>
<dbReference type="eggNOG" id="KOG1028">
    <property type="taxonomic scope" value="Eukaryota"/>
</dbReference>
<dbReference type="GeneTree" id="ENSGT00940000159420"/>
<dbReference type="HOGENOM" id="CLU_1049555_0_0_1"/>
<dbReference type="InParanoid" id="Q8NB59"/>
<dbReference type="OMA" id="MTFLFWY"/>
<dbReference type="OrthoDB" id="5978493at2759"/>
<dbReference type="PAN-GO" id="Q8NB59">
    <property type="GO annotations" value="1 GO annotation based on evolutionary models"/>
</dbReference>
<dbReference type="PhylomeDB" id="Q8NB59"/>
<dbReference type="TreeFam" id="TF351132"/>
<dbReference type="PathwayCommons" id="Q8NB59"/>
<dbReference type="BioGRID-ORCS" id="255928">
    <property type="hits" value="15 hits in 1146 CRISPR screens"/>
</dbReference>
<dbReference type="ChiTaRS" id="SYT14">
    <property type="organism name" value="human"/>
</dbReference>
<dbReference type="GeneWiki" id="SYT14"/>
<dbReference type="GenomeRNAi" id="255928"/>
<dbReference type="Pharos" id="Q8NB59">
    <property type="development level" value="Tbio"/>
</dbReference>
<dbReference type="PRO" id="PR:Q8NB59"/>
<dbReference type="Proteomes" id="UP000005640">
    <property type="component" value="Chromosome 1"/>
</dbReference>
<dbReference type="RNAct" id="Q8NB59">
    <property type="molecule type" value="protein"/>
</dbReference>
<dbReference type="Bgee" id="ENSG00000143469">
    <property type="expression patterns" value="Expressed in male germ line stem cell (sensu Vertebrata) in testis and 66 other cell types or tissues"/>
</dbReference>
<dbReference type="ExpressionAtlas" id="Q8NB59">
    <property type="expression patterns" value="baseline and differential"/>
</dbReference>
<dbReference type="GO" id="GO:0016020">
    <property type="term" value="C:membrane"/>
    <property type="evidence" value="ECO:0007669"/>
    <property type="project" value="UniProtKB-SubCell"/>
</dbReference>
<dbReference type="GO" id="GO:0005543">
    <property type="term" value="F:phospholipid binding"/>
    <property type="evidence" value="ECO:0000318"/>
    <property type="project" value="GO_Central"/>
</dbReference>
<dbReference type="CDD" id="cd08389">
    <property type="entry name" value="C2A_Synaptotagmin-14_16"/>
    <property type="match status" value="1"/>
</dbReference>
<dbReference type="CDD" id="cd08408">
    <property type="entry name" value="C2B_Synaptotagmin-14_16"/>
    <property type="match status" value="1"/>
</dbReference>
<dbReference type="FunFam" id="2.60.40.150:FF:000153">
    <property type="entry name" value="Synaptotagmin 16"/>
    <property type="match status" value="1"/>
</dbReference>
<dbReference type="FunFam" id="2.60.40.150:FF:000062">
    <property type="entry name" value="synaptotagmin-14 isoform X1"/>
    <property type="match status" value="1"/>
</dbReference>
<dbReference type="Gene3D" id="2.60.40.150">
    <property type="entry name" value="C2 domain"/>
    <property type="match status" value="2"/>
</dbReference>
<dbReference type="InterPro" id="IPR000008">
    <property type="entry name" value="C2_dom"/>
</dbReference>
<dbReference type="InterPro" id="IPR035892">
    <property type="entry name" value="C2_domain_sf"/>
</dbReference>
<dbReference type="InterPro" id="IPR043541">
    <property type="entry name" value="SYT14/14L/16"/>
</dbReference>
<dbReference type="PANTHER" id="PTHR46129">
    <property type="entry name" value="SYNAPTOTAGMIN 14, ISOFORM D"/>
    <property type="match status" value="1"/>
</dbReference>
<dbReference type="PANTHER" id="PTHR46129:SF3">
    <property type="entry name" value="SYNAPTOTAGMIN-14-RELATED"/>
    <property type="match status" value="1"/>
</dbReference>
<dbReference type="Pfam" id="PF00168">
    <property type="entry name" value="C2"/>
    <property type="match status" value="2"/>
</dbReference>
<dbReference type="SMART" id="SM00239">
    <property type="entry name" value="C2"/>
    <property type="match status" value="2"/>
</dbReference>
<dbReference type="SUPFAM" id="SSF49562">
    <property type="entry name" value="C2 domain (Calcium/lipid-binding domain, CaLB)"/>
    <property type="match status" value="2"/>
</dbReference>
<dbReference type="PROSITE" id="PS50004">
    <property type="entry name" value="C2"/>
    <property type="match status" value="2"/>
</dbReference>
<name>SYT14_HUMAN</name>